<protein>
    <recommendedName>
        <fullName>PDZ domain-containing protein 11</fullName>
    </recommendedName>
</protein>
<accession>Q5ZIK2</accession>
<gene>
    <name type="primary">PDZD11</name>
    <name type="synonym">PDZK11</name>
    <name type="ORF">RCJMB04_25h3</name>
</gene>
<organism>
    <name type="scientific">Gallus gallus</name>
    <name type="common">Chicken</name>
    <dbReference type="NCBI Taxonomy" id="9031"/>
    <lineage>
        <taxon>Eukaryota</taxon>
        <taxon>Metazoa</taxon>
        <taxon>Chordata</taxon>
        <taxon>Craniata</taxon>
        <taxon>Vertebrata</taxon>
        <taxon>Euteleostomi</taxon>
        <taxon>Archelosauria</taxon>
        <taxon>Archosauria</taxon>
        <taxon>Dinosauria</taxon>
        <taxon>Saurischia</taxon>
        <taxon>Theropoda</taxon>
        <taxon>Coelurosauria</taxon>
        <taxon>Aves</taxon>
        <taxon>Neognathae</taxon>
        <taxon>Galloanserae</taxon>
        <taxon>Galliformes</taxon>
        <taxon>Phasianidae</taxon>
        <taxon>Phasianinae</taxon>
        <taxon>Gallus</taxon>
    </lineage>
</organism>
<comment type="subcellular location">
    <subcellularLocation>
        <location evidence="1">Cytoplasm</location>
    </subcellularLocation>
</comment>
<name>PDZ11_CHICK</name>
<sequence>MEGRLPYDDFPVVFLPPYESPPAWVPPHERVYHPDYNNELTQFLPRTVVLKKPPGAQLGFNIRGGKASQLGIFISKVIPDSDAHRAGLQEGDQVLSVNDVDFQDIEHSKAVEILKTAREITMRVRYFPYSKCLLAPNLVT</sequence>
<feature type="chain" id="PRO_0000058272" description="PDZ domain-containing protein 11">
    <location>
        <begin position="1"/>
        <end position="140"/>
    </location>
</feature>
<feature type="domain" description="PDZ" evidence="2">
    <location>
        <begin position="47"/>
        <end position="129"/>
    </location>
</feature>
<dbReference type="EMBL" id="AJ720782">
    <property type="protein sequence ID" value="CAG32441.1"/>
    <property type="molecule type" value="mRNA"/>
</dbReference>
<dbReference type="RefSeq" id="NP_001026282.1">
    <property type="nucleotide sequence ID" value="NM_001031111.1"/>
</dbReference>
<dbReference type="SMR" id="Q5ZIK2"/>
<dbReference type="FunCoup" id="Q5ZIK2">
    <property type="interactions" value="382"/>
</dbReference>
<dbReference type="STRING" id="9031.ENSGALP00000039853"/>
<dbReference type="PaxDb" id="9031-ENSGALP00000039853"/>
<dbReference type="GeneID" id="422153"/>
<dbReference type="KEGG" id="gga:422153"/>
<dbReference type="CTD" id="51248"/>
<dbReference type="VEuPathDB" id="HostDB:geneid_422153"/>
<dbReference type="eggNOG" id="KOG3528">
    <property type="taxonomic scope" value="Eukaryota"/>
</dbReference>
<dbReference type="HOGENOM" id="CLU_133335_0_0_1"/>
<dbReference type="InParanoid" id="Q5ZIK2"/>
<dbReference type="OMA" id="RGGREHN"/>
<dbReference type="OrthoDB" id="6021951at2759"/>
<dbReference type="PhylomeDB" id="Q5ZIK2"/>
<dbReference type="Reactome" id="R-GGA-196780">
    <property type="pathway name" value="Biotin transport and metabolism"/>
</dbReference>
<dbReference type="Reactome" id="R-GGA-199220">
    <property type="pathway name" value="Vitamin B5 (pantothenate) metabolism"/>
</dbReference>
<dbReference type="Reactome" id="R-GGA-425397">
    <property type="pathway name" value="Transport of vitamins, nucleosides, and related molecules"/>
</dbReference>
<dbReference type="Reactome" id="R-GGA-6803544">
    <property type="pathway name" value="Ion influx/efflux at host-pathogen interface"/>
</dbReference>
<dbReference type="Reactome" id="R-GGA-936837">
    <property type="pathway name" value="Ion transport by P-type ATPases"/>
</dbReference>
<dbReference type="PRO" id="PR:Q5ZIK2"/>
<dbReference type="Proteomes" id="UP000000539">
    <property type="component" value="Chromosome 4"/>
</dbReference>
<dbReference type="Bgee" id="ENSGALG00000004198">
    <property type="expression patterns" value="Expressed in kidney and 12 other cell types or tissues"/>
</dbReference>
<dbReference type="GO" id="GO:0016323">
    <property type="term" value="C:basolateral plasma membrane"/>
    <property type="evidence" value="ECO:0000250"/>
    <property type="project" value="UniProtKB"/>
</dbReference>
<dbReference type="GO" id="GO:0005911">
    <property type="term" value="C:cell-cell junction"/>
    <property type="evidence" value="ECO:0000318"/>
    <property type="project" value="GO_Central"/>
</dbReference>
<dbReference type="GO" id="GO:0005829">
    <property type="term" value="C:cytosol"/>
    <property type="evidence" value="ECO:0000250"/>
    <property type="project" value="UniProtKB"/>
</dbReference>
<dbReference type="GO" id="GO:0098793">
    <property type="term" value="C:presynapse"/>
    <property type="evidence" value="ECO:0007669"/>
    <property type="project" value="GOC"/>
</dbReference>
<dbReference type="GO" id="GO:0030674">
    <property type="term" value="F:protein-macromolecule adaptor activity"/>
    <property type="evidence" value="ECO:0000318"/>
    <property type="project" value="GO_Central"/>
</dbReference>
<dbReference type="GO" id="GO:0007269">
    <property type="term" value="P:neurotransmitter secretion"/>
    <property type="evidence" value="ECO:0000318"/>
    <property type="project" value="GO_Central"/>
</dbReference>
<dbReference type="GO" id="GO:0046931">
    <property type="term" value="P:pore complex assembly"/>
    <property type="evidence" value="ECO:0000318"/>
    <property type="project" value="GO_Central"/>
</dbReference>
<dbReference type="GO" id="GO:0008582">
    <property type="term" value="P:regulation of synaptic assembly at neuromuscular junction"/>
    <property type="evidence" value="ECO:0000318"/>
    <property type="project" value="GO_Central"/>
</dbReference>
<dbReference type="GO" id="GO:0048489">
    <property type="term" value="P:synaptic vesicle transport"/>
    <property type="evidence" value="ECO:0000318"/>
    <property type="project" value="GO_Central"/>
</dbReference>
<dbReference type="CDD" id="cd06752">
    <property type="entry name" value="PDZ_PDZD11-like"/>
    <property type="match status" value="1"/>
</dbReference>
<dbReference type="FunFam" id="2.30.42.10:FF:000096">
    <property type="entry name" value="PDZ domain-containing protein 11"/>
    <property type="match status" value="1"/>
</dbReference>
<dbReference type="Gene3D" id="2.30.42.10">
    <property type="match status" value="1"/>
</dbReference>
<dbReference type="InterPro" id="IPR051109">
    <property type="entry name" value="MAM_complex_regulator"/>
</dbReference>
<dbReference type="InterPro" id="IPR001478">
    <property type="entry name" value="PDZ"/>
</dbReference>
<dbReference type="InterPro" id="IPR036034">
    <property type="entry name" value="PDZ_sf"/>
</dbReference>
<dbReference type="PANTHER" id="PTHR14063">
    <property type="entry name" value="PROTEIN LIN-7 HOMOLOG"/>
    <property type="match status" value="1"/>
</dbReference>
<dbReference type="Pfam" id="PF00595">
    <property type="entry name" value="PDZ"/>
    <property type="match status" value="1"/>
</dbReference>
<dbReference type="SMART" id="SM00228">
    <property type="entry name" value="PDZ"/>
    <property type="match status" value="1"/>
</dbReference>
<dbReference type="SUPFAM" id="SSF50156">
    <property type="entry name" value="PDZ domain-like"/>
    <property type="match status" value="1"/>
</dbReference>
<dbReference type="PROSITE" id="PS50106">
    <property type="entry name" value="PDZ"/>
    <property type="match status" value="1"/>
</dbReference>
<proteinExistence type="evidence at transcript level"/>
<keyword id="KW-0963">Cytoplasm</keyword>
<keyword id="KW-1185">Reference proteome</keyword>
<evidence type="ECO:0000250" key="1">
    <source>
        <dbReference type="UniProtKB" id="Q5EBL8"/>
    </source>
</evidence>
<evidence type="ECO:0000255" key="2">
    <source>
        <dbReference type="PROSITE-ProRule" id="PRU00143"/>
    </source>
</evidence>
<reference key="1">
    <citation type="journal article" date="2005" name="Genome Biol.">
        <title>Full-length cDNAs from chicken bursal lymphocytes to facilitate gene function analysis.</title>
        <authorList>
            <person name="Caldwell R.B."/>
            <person name="Kierzek A.M."/>
            <person name="Arakawa H."/>
            <person name="Bezzubov Y."/>
            <person name="Zaim J."/>
            <person name="Fiedler P."/>
            <person name="Kutter S."/>
            <person name="Blagodatski A."/>
            <person name="Kostovska D."/>
            <person name="Koter M."/>
            <person name="Plachy J."/>
            <person name="Carninci P."/>
            <person name="Hayashizaki Y."/>
            <person name="Buerstedde J.-M."/>
        </authorList>
    </citation>
    <scope>NUCLEOTIDE SEQUENCE [LARGE SCALE MRNA]</scope>
    <source>
        <strain>CB</strain>
        <tissue>Bursa of Fabricius</tissue>
    </source>
</reference>